<reference key="1">
    <citation type="submission" date="2007-12" db="EMBL/GenBank/DDBJ databases">
        <title>Complete sequence of chromosome of Francisella philomiragia subsp. philomiragia ATCC 25017.</title>
        <authorList>
            <consortium name="US DOE Joint Genome Institute"/>
            <person name="Copeland A."/>
            <person name="Lucas S."/>
            <person name="Lapidus A."/>
            <person name="Barry K."/>
            <person name="Detter J.C."/>
            <person name="Glavina del Rio T."/>
            <person name="Hammon N."/>
            <person name="Israni S."/>
            <person name="Dalin E."/>
            <person name="Tice H."/>
            <person name="Pitluck S."/>
            <person name="Chain P."/>
            <person name="Malfatti S."/>
            <person name="Shin M."/>
            <person name="Vergez L."/>
            <person name="Schmutz J."/>
            <person name="Larimer F."/>
            <person name="Land M."/>
            <person name="Hauser L."/>
            <person name="Richardson P."/>
        </authorList>
    </citation>
    <scope>NUCLEOTIDE SEQUENCE [LARGE SCALE GENOMIC DNA]</scope>
    <source>
        <strain>ATCC 25017 / CCUG 19701 / FSC 153 / O#319-036</strain>
    </source>
</reference>
<sequence>MQKIVQNQTTESLIRKDLQKFSAYSSARSLKVDGDIWLNANESPYNDEYLYNRYPEPQPRKLVEKLAKIYDVDASNILVTRGSDEGIDLLFRLYCEYQKDSAFAVEPTFGMYKIAAQLQGVDYKTLKLKEENNFEINITELLANIPDNCKLLFLCTPNNPTGKSIPLADIEQILSELAGNCVVVVDEAYIEFSNEKSVSSIINKYENLVVLRTLSKSFGMAGLRLGVVITNSDRIVWLRKILAPYPIPKTTESTILAMLDDENLANIASQIIEIKEQREHLYQALSQMKIVDKLWSSDANFILVRFRESIFNKLIDNKIVVRSMAHFFNDEKVLRISIGTVSENKRLIEVLQKLSSEYETK</sequence>
<dbReference type="EC" id="2.6.1.9" evidence="1"/>
<dbReference type="EMBL" id="CP000937">
    <property type="protein sequence ID" value="ABZ86287.1"/>
    <property type="molecule type" value="Genomic_DNA"/>
</dbReference>
<dbReference type="SMR" id="B0TY45"/>
<dbReference type="KEGG" id="fph:Fphi_0067"/>
<dbReference type="eggNOG" id="COG0079">
    <property type="taxonomic scope" value="Bacteria"/>
</dbReference>
<dbReference type="HOGENOM" id="CLU_017584_3_1_6"/>
<dbReference type="UniPathway" id="UPA00031">
    <property type="reaction ID" value="UER00012"/>
</dbReference>
<dbReference type="GO" id="GO:0004400">
    <property type="term" value="F:histidinol-phosphate transaminase activity"/>
    <property type="evidence" value="ECO:0007669"/>
    <property type="project" value="UniProtKB-UniRule"/>
</dbReference>
<dbReference type="GO" id="GO:0030170">
    <property type="term" value="F:pyridoxal phosphate binding"/>
    <property type="evidence" value="ECO:0007669"/>
    <property type="project" value="InterPro"/>
</dbReference>
<dbReference type="GO" id="GO:0000105">
    <property type="term" value="P:L-histidine biosynthetic process"/>
    <property type="evidence" value="ECO:0007669"/>
    <property type="project" value="UniProtKB-UniRule"/>
</dbReference>
<dbReference type="CDD" id="cd00609">
    <property type="entry name" value="AAT_like"/>
    <property type="match status" value="1"/>
</dbReference>
<dbReference type="Gene3D" id="3.90.1150.10">
    <property type="entry name" value="Aspartate Aminotransferase, domain 1"/>
    <property type="match status" value="1"/>
</dbReference>
<dbReference type="Gene3D" id="3.40.640.10">
    <property type="entry name" value="Type I PLP-dependent aspartate aminotransferase-like (Major domain)"/>
    <property type="match status" value="1"/>
</dbReference>
<dbReference type="HAMAP" id="MF_01023">
    <property type="entry name" value="HisC_aminotrans_2"/>
    <property type="match status" value="1"/>
</dbReference>
<dbReference type="InterPro" id="IPR001917">
    <property type="entry name" value="Aminotrans_II_pyridoxalP_BS"/>
</dbReference>
<dbReference type="InterPro" id="IPR004839">
    <property type="entry name" value="Aminotransferase_I/II_large"/>
</dbReference>
<dbReference type="InterPro" id="IPR005861">
    <property type="entry name" value="HisP_aminotrans"/>
</dbReference>
<dbReference type="InterPro" id="IPR015424">
    <property type="entry name" value="PyrdxlP-dep_Trfase"/>
</dbReference>
<dbReference type="InterPro" id="IPR015421">
    <property type="entry name" value="PyrdxlP-dep_Trfase_major"/>
</dbReference>
<dbReference type="InterPro" id="IPR015422">
    <property type="entry name" value="PyrdxlP-dep_Trfase_small"/>
</dbReference>
<dbReference type="NCBIfam" id="TIGR01141">
    <property type="entry name" value="hisC"/>
    <property type="match status" value="1"/>
</dbReference>
<dbReference type="PANTHER" id="PTHR42885:SF2">
    <property type="entry name" value="HISTIDINOL-PHOSPHATE AMINOTRANSFERASE"/>
    <property type="match status" value="1"/>
</dbReference>
<dbReference type="PANTHER" id="PTHR42885">
    <property type="entry name" value="HISTIDINOL-PHOSPHATE AMINOTRANSFERASE-RELATED"/>
    <property type="match status" value="1"/>
</dbReference>
<dbReference type="Pfam" id="PF00155">
    <property type="entry name" value="Aminotran_1_2"/>
    <property type="match status" value="1"/>
</dbReference>
<dbReference type="SUPFAM" id="SSF53383">
    <property type="entry name" value="PLP-dependent transferases"/>
    <property type="match status" value="1"/>
</dbReference>
<dbReference type="PROSITE" id="PS00599">
    <property type="entry name" value="AA_TRANSFER_CLASS_2"/>
    <property type="match status" value="1"/>
</dbReference>
<keyword id="KW-0028">Amino-acid biosynthesis</keyword>
<keyword id="KW-0032">Aminotransferase</keyword>
<keyword id="KW-0368">Histidine biosynthesis</keyword>
<keyword id="KW-0663">Pyridoxal phosphate</keyword>
<keyword id="KW-0808">Transferase</keyword>
<name>HIS8_FRAP2</name>
<comment type="catalytic activity">
    <reaction evidence="1">
        <text>L-histidinol phosphate + 2-oxoglutarate = 3-(imidazol-4-yl)-2-oxopropyl phosphate + L-glutamate</text>
        <dbReference type="Rhea" id="RHEA:23744"/>
        <dbReference type="ChEBI" id="CHEBI:16810"/>
        <dbReference type="ChEBI" id="CHEBI:29985"/>
        <dbReference type="ChEBI" id="CHEBI:57766"/>
        <dbReference type="ChEBI" id="CHEBI:57980"/>
        <dbReference type="EC" id="2.6.1.9"/>
    </reaction>
</comment>
<comment type="cofactor">
    <cofactor evidence="1">
        <name>pyridoxal 5'-phosphate</name>
        <dbReference type="ChEBI" id="CHEBI:597326"/>
    </cofactor>
</comment>
<comment type="pathway">
    <text evidence="1">Amino-acid biosynthesis; L-histidine biosynthesis; L-histidine from 5-phospho-alpha-D-ribose 1-diphosphate: step 7/9.</text>
</comment>
<comment type="subunit">
    <text evidence="1">Homodimer.</text>
</comment>
<comment type="similarity">
    <text evidence="1">Belongs to the class-II pyridoxal-phosphate-dependent aminotransferase family. Histidinol-phosphate aminotransferase subfamily.</text>
</comment>
<gene>
    <name evidence="1" type="primary">hisC</name>
    <name type="ordered locus">Fphi_0067</name>
</gene>
<proteinExistence type="inferred from homology"/>
<protein>
    <recommendedName>
        <fullName evidence="1">Histidinol-phosphate aminotransferase</fullName>
        <ecNumber evidence="1">2.6.1.9</ecNumber>
    </recommendedName>
    <alternativeName>
        <fullName evidence="1">Imidazole acetol-phosphate transaminase</fullName>
    </alternativeName>
</protein>
<organism>
    <name type="scientific">Francisella philomiragia subsp. philomiragia (strain ATCC 25017 / CCUG 19701 / FSC 153 / O#319-036)</name>
    <dbReference type="NCBI Taxonomy" id="484022"/>
    <lineage>
        <taxon>Bacteria</taxon>
        <taxon>Pseudomonadati</taxon>
        <taxon>Pseudomonadota</taxon>
        <taxon>Gammaproteobacteria</taxon>
        <taxon>Thiotrichales</taxon>
        <taxon>Francisellaceae</taxon>
        <taxon>Francisella</taxon>
    </lineage>
</organism>
<accession>B0TY45</accession>
<evidence type="ECO:0000255" key="1">
    <source>
        <dbReference type="HAMAP-Rule" id="MF_01023"/>
    </source>
</evidence>
<feature type="chain" id="PRO_1000135400" description="Histidinol-phosphate aminotransferase">
    <location>
        <begin position="1"/>
        <end position="361"/>
    </location>
</feature>
<feature type="modified residue" description="N6-(pyridoxal phosphate)lysine" evidence="1">
    <location>
        <position position="216"/>
    </location>
</feature>